<sequence length="37" mass="4509">MKIRASVRKICEKCRLIRRRGRIIVICYNPKHKQRQG</sequence>
<reference key="1">
    <citation type="journal article" date="2005" name="Mol. Biol. Evol.">
        <title>Analysis of Acorus calamus chloroplast genome and its phylogenetic implications.</title>
        <authorList>
            <person name="Goremykin V.V."/>
            <person name="Holland B."/>
            <person name="Hirsch-Ernst K.I."/>
            <person name="Hellwig F.H."/>
        </authorList>
    </citation>
    <scope>NUCLEOTIDE SEQUENCE [LARGE SCALE GENOMIC DNA]</scope>
</reference>
<organism>
    <name type="scientific">Acorus calamus</name>
    <name type="common">Sweet flag</name>
    <dbReference type="NCBI Taxonomy" id="4465"/>
    <lineage>
        <taxon>Eukaryota</taxon>
        <taxon>Viridiplantae</taxon>
        <taxon>Streptophyta</taxon>
        <taxon>Embryophyta</taxon>
        <taxon>Tracheophyta</taxon>
        <taxon>Spermatophyta</taxon>
        <taxon>Magnoliopsida</taxon>
        <taxon>Liliopsida</taxon>
        <taxon>Acoraceae</taxon>
        <taxon>Acorus</taxon>
    </lineage>
</organism>
<proteinExistence type="inferred from homology"/>
<accession>Q3V500</accession>
<dbReference type="EMBL" id="AJ879453">
    <property type="protein sequence ID" value="CAI53828.1"/>
    <property type="molecule type" value="Genomic_DNA"/>
</dbReference>
<dbReference type="RefSeq" id="YP_319797.1">
    <property type="nucleotide sequence ID" value="NC_007407.1"/>
</dbReference>
<dbReference type="SMR" id="Q3V500"/>
<dbReference type="GeneID" id="3677448"/>
<dbReference type="GO" id="GO:0009507">
    <property type="term" value="C:chloroplast"/>
    <property type="evidence" value="ECO:0007669"/>
    <property type="project" value="UniProtKB-SubCell"/>
</dbReference>
<dbReference type="GO" id="GO:1990904">
    <property type="term" value="C:ribonucleoprotein complex"/>
    <property type="evidence" value="ECO:0007669"/>
    <property type="project" value="UniProtKB-KW"/>
</dbReference>
<dbReference type="GO" id="GO:0005840">
    <property type="term" value="C:ribosome"/>
    <property type="evidence" value="ECO:0007669"/>
    <property type="project" value="UniProtKB-KW"/>
</dbReference>
<dbReference type="GO" id="GO:0003735">
    <property type="term" value="F:structural constituent of ribosome"/>
    <property type="evidence" value="ECO:0007669"/>
    <property type="project" value="InterPro"/>
</dbReference>
<dbReference type="GO" id="GO:0006412">
    <property type="term" value="P:translation"/>
    <property type="evidence" value="ECO:0007669"/>
    <property type="project" value="UniProtKB-UniRule"/>
</dbReference>
<dbReference type="HAMAP" id="MF_00251">
    <property type="entry name" value="Ribosomal_bL36"/>
    <property type="match status" value="1"/>
</dbReference>
<dbReference type="InterPro" id="IPR000473">
    <property type="entry name" value="Ribosomal_bL36"/>
</dbReference>
<dbReference type="InterPro" id="IPR035977">
    <property type="entry name" value="Ribosomal_bL36_sp"/>
</dbReference>
<dbReference type="NCBIfam" id="TIGR01022">
    <property type="entry name" value="rpmJ_bact"/>
    <property type="match status" value="1"/>
</dbReference>
<dbReference type="PANTHER" id="PTHR42888">
    <property type="entry name" value="50S RIBOSOMAL PROTEIN L36, CHLOROPLASTIC"/>
    <property type="match status" value="1"/>
</dbReference>
<dbReference type="PANTHER" id="PTHR42888:SF1">
    <property type="entry name" value="LARGE RIBOSOMAL SUBUNIT PROTEIN BL36C"/>
    <property type="match status" value="1"/>
</dbReference>
<dbReference type="Pfam" id="PF00444">
    <property type="entry name" value="Ribosomal_L36"/>
    <property type="match status" value="1"/>
</dbReference>
<dbReference type="SUPFAM" id="SSF57840">
    <property type="entry name" value="Ribosomal protein L36"/>
    <property type="match status" value="1"/>
</dbReference>
<dbReference type="PROSITE" id="PS00828">
    <property type="entry name" value="RIBOSOMAL_L36"/>
    <property type="match status" value="1"/>
</dbReference>
<gene>
    <name evidence="1" type="primary">rpl36</name>
</gene>
<feature type="chain" id="PRO_0000344738" description="Large ribosomal subunit protein bL36c">
    <location>
        <begin position="1"/>
        <end position="37"/>
    </location>
</feature>
<evidence type="ECO:0000255" key="1">
    <source>
        <dbReference type="HAMAP-Rule" id="MF_00251"/>
    </source>
</evidence>
<evidence type="ECO:0000305" key="2"/>
<geneLocation type="chloroplast"/>
<name>RK36_ACOCL</name>
<protein>
    <recommendedName>
        <fullName evidence="1">Large ribosomal subunit protein bL36c</fullName>
    </recommendedName>
    <alternativeName>
        <fullName evidence="2">50S ribosomal protein L36, chloroplastic</fullName>
    </alternativeName>
</protein>
<comment type="subcellular location">
    <subcellularLocation>
        <location>Plastid</location>
        <location>Chloroplast</location>
    </subcellularLocation>
</comment>
<comment type="similarity">
    <text evidence="1">Belongs to the bacterial ribosomal protein bL36 family.</text>
</comment>
<keyword id="KW-0150">Chloroplast</keyword>
<keyword id="KW-0934">Plastid</keyword>
<keyword id="KW-0687">Ribonucleoprotein</keyword>
<keyword id="KW-0689">Ribosomal protein</keyword>